<accession>A3NKP7</accession>
<name>BETI_BURP6</name>
<feature type="chain" id="PRO_1000083558" description="HTH-type transcriptional regulator BetI">
    <location>
        <begin position="1"/>
        <end position="195"/>
    </location>
</feature>
<feature type="domain" description="HTH tetR-type" evidence="2">
    <location>
        <begin position="8"/>
        <end position="68"/>
    </location>
</feature>
<feature type="DNA-binding region" description="H-T-H motif" evidence="2">
    <location>
        <begin position="31"/>
        <end position="50"/>
    </location>
</feature>
<protein>
    <recommendedName>
        <fullName evidence="2">HTH-type transcriptional regulator BetI</fullName>
    </recommendedName>
</protein>
<evidence type="ECO:0000250" key="1"/>
<evidence type="ECO:0000255" key="2">
    <source>
        <dbReference type="HAMAP-Rule" id="MF_00768"/>
    </source>
</evidence>
<reference key="1">
    <citation type="journal article" date="2010" name="Genome Biol. Evol.">
        <title>Continuing evolution of Burkholderia mallei through genome reduction and large-scale rearrangements.</title>
        <authorList>
            <person name="Losada L."/>
            <person name="Ronning C.M."/>
            <person name="DeShazer D."/>
            <person name="Woods D."/>
            <person name="Fedorova N."/>
            <person name="Kim H.S."/>
            <person name="Shabalina S.A."/>
            <person name="Pearson T.R."/>
            <person name="Brinkac L."/>
            <person name="Tan P."/>
            <person name="Nandi T."/>
            <person name="Crabtree J."/>
            <person name="Badger J."/>
            <person name="Beckstrom-Sternberg S."/>
            <person name="Saqib M."/>
            <person name="Schutzer S.E."/>
            <person name="Keim P."/>
            <person name="Nierman W.C."/>
        </authorList>
    </citation>
    <scope>NUCLEOTIDE SEQUENCE [LARGE SCALE GENOMIC DNA]</scope>
    <source>
        <strain>668</strain>
    </source>
</reference>
<sequence length="195" mass="21490">MPKLGMREIRRAQLIDATLRSIDEAGLPGTTLASVAQRANISTGIVSHYFGDKDGLLEATMRHVLRDLWAATTRRRAAASDAPRARLRAVVAANFDDTQISAPVMKTWLAFWSQSMHEPTLRRLQRVNTRRLHSNLCAEFAKTLPRARAREAASGLAALIDGLWLRGALAGEPLDTKAALKLANDYIDQLLAPRV</sequence>
<dbReference type="EMBL" id="CP000571">
    <property type="protein sequence ID" value="ABN86665.1"/>
    <property type="molecule type" value="Genomic_DNA"/>
</dbReference>
<dbReference type="RefSeq" id="WP_004202513.1">
    <property type="nucleotide sequence ID" value="NC_009075.1"/>
</dbReference>
<dbReference type="SMR" id="A3NKP7"/>
<dbReference type="GeneID" id="93063521"/>
<dbReference type="KEGG" id="bpd:BURPS668_A1923"/>
<dbReference type="HOGENOM" id="CLU_069356_15_4_4"/>
<dbReference type="UniPathway" id="UPA00529"/>
<dbReference type="GO" id="GO:0003700">
    <property type="term" value="F:DNA-binding transcription factor activity"/>
    <property type="evidence" value="ECO:0007669"/>
    <property type="project" value="UniProtKB-UniRule"/>
</dbReference>
<dbReference type="GO" id="GO:0000976">
    <property type="term" value="F:transcription cis-regulatory region binding"/>
    <property type="evidence" value="ECO:0007669"/>
    <property type="project" value="TreeGrafter"/>
</dbReference>
<dbReference type="GO" id="GO:0019285">
    <property type="term" value="P:glycine betaine biosynthetic process from choline"/>
    <property type="evidence" value="ECO:0007669"/>
    <property type="project" value="UniProtKB-UniRule"/>
</dbReference>
<dbReference type="GO" id="GO:0045892">
    <property type="term" value="P:negative regulation of DNA-templated transcription"/>
    <property type="evidence" value="ECO:0007669"/>
    <property type="project" value="UniProtKB-UniRule"/>
</dbReference>
<dbReference type="Gene3D" id="1.10.357.10">
    <property type="entry name" value="Tetracycline Repressor, domain 2"/>
    <property type="match status" value="1"/>
</dbReference>
<dbReference type="HAMAP" id="MF_00768">
    <property type="entry name" value="HTH_type_BetI"/>
    <property type="match status" value="1"/>
</dbReference>
<dbReference type="InterPro" id="IPR039538">
    <property type="entry name" value="BetI_C"/>
</dbReference>
<dbReference type="InterPro" id="IPR023772">
    <property type="entry name" value="DNA-bd_HTH_TetR-type_CS"/>
</dbReference>
<dbReference type="InterPro" id="IPR009057">
    <property type="entry name" value="Homeodomain-like_sf"/>
</dbReference>
<dbReference type="InterPro" id="IPR050109">
    <property type="entry name" value="HTH-type_TetR-like_transc_reg"/>
</dbReference>
<dbReference type="InterPro" id="IPR001647">
    <property type="entry name" value="HTH_TetR"/>
</dbReference>
<dbReference type="InterPro" id="IPR036271">
    <property type="entry name" value="Tet_transcr_reg_TetR-rel_C_sf"/>
</dbReference>
<dbReference type="InterPro" id="IPR017757">
    <property type="entry name" value="Tscrpt_rep_BetI"/>
</dbReference>
<dbReference type="NCBIfam" id="TIGR03384">
    <property type="entry name" value="betaine_BetI"/>
    <property type="match status" value="1"/>
</dbReference>
<dbReference type="NCBIfam" id="NF001978">
    <property type="entry name" value="PRK00767.1"/>
    <property type="match status" value="1"/>
</dbReference>
<dbReference type="PANTHER" id="PTHR30055:SF234">
    <property type="entry name" value="HTH-TYPE TRANSCRIPTIONAL REGULATOR BETI"/>
    <property type="match status" value="1"/>
</dbReference>
<dbReference type="PANTHER" id="PTHR30055">
    <property type="entry name" value="HTH-TYPE TRANSCRIPTIONAL REGULATOR RUTR"/>
    <property type="match status" value="1"/>
</dbReference>
<dbReference type="Pfam" id="PF13977">
    <property type="entry name" value="TetR_C_6"/>
    <property type="match status" value="1"/>
</dbReference>
<dbReference type="Pfam" id="PF00440">
    <property type="entry name" value="TetR_N"/>
    <property type="match status" value="1"/>
</dbReference>
<dbReference type="SUPFAM" id="SSF46689">
    <property type="entry name" value="Homeodomain-like"/>
    <property type="match status" value="1"/>
</dbReference>
<dbReference type="SUPFAM" id="SSF48498">
    <property type="entry name" value="Tetracyclin repressor-like, C-terminal domain"/>
    <property type="match status" value="1"/>
</dbReference>
<dbReference type="PROSITE" id="PS01081">
    <property type="entry name" value="HTH_TETR_1"/>
    <property type="match status" value="1"/>
</dbReference>
<dbReference type="PROSITE" id="PS50977">
    <property type="entry name" value="HTH_TETR_2"/>
    <property type="match status" value="1"/>
</dbReference>
<gene>
    <name evidence="2" type="primary">betI</name>
    <name type="ordered locus">BURPS668_A1923</name>
</gene>
<proteinExistence type="inferred from homology"/>
<comment type="function">
    <text evidence="1">Repressor involved in the biosynthesis of the osmoprotectant glycine betaine. It represses transcription of the choline transporter BetT and the genes of BetAB involved in the synthesis of glycine betaine (By similarity).</text>
</comment>
<comment type="pathway">
    <text>Amine and polyamine biosynthesis; betaine biosynthesis via choline pathway [regulation].</text>
</comment>
<organism>
    <name type="scientific">Burkholderia pseudomallei (strain 668)</name>
    <dbReference type="NCBI Taxonomy" id="320373"/>
    <lineage>
        <taxon>Bacteria</taxon>
        <taxon>Pseudomonadati</taxon>
        <taxon>Pseudomonadota</taxon>
        <taxon>Betaproteobacteria</taxon>
        <taxon>Burkholderiales</taxon>
        <taxon>Burkholderiaceae</taxon>
        <taxon>Burkholderia</taxon>
        <taxon>pseudomallei group</taxon>
    </lineage>
</organism>
<keyword id="KW-0238">DNA-binding</keyword>
<keyword id="KW-0678">Repressor</keyword>
<keyword id="KW-0804">Transcription</keyword>
<keyword id="KW-0805">Transcription regulation</keyword>